<name>RS3_SALAI</name>
<sequence length="288" mass="31657">MGQKVHPHGFRLGISTDWKSRWFADKLYKDYIGEDVKIRRMMSKGLERAGISKVDIERTRDRVRVDIHTARPGIVIGRKGAEADRIRGKLEKLTGKQVQLNIIEVKSPESDAQLVAQGVAEQLSSRVSFRRAMRKAMQSAMKNPVCKGIRVQVSGRLGGAEMSRTEFYREGRVPLHTLRANIEYGFFEARTTFGRIGVKVWIYKGDAVPGRETPAEAPSRPRRERGDRSERPRRGRSGSSGTTAGGTEAGRAAATTIAQAAETPSGEPVDADAVASAATQPAETQQEG</sequence>
<comment type="function">
    <text evidence="1">Binds the lower part of the 30S subunit head. Binds mRNA in the 70S ribosome, positioning it for translation.</text>
</comment>
<comment type="subunit">
    <text evidence="1">Part of the 30S ribosomal subunit. Forms a tight complex with proteins S10 and S14.</text>
</comment>
<comment type="similarity">
    <text evidence="1">Belongs to the universal ribosomal protein uS3 family.</text>
</comment>
<dbReference type="EMBL" id="CP000850">
    <property type="protein sequence ID" value="ABW00091.1"/>
    <property type="molecule type" value="Genomic_DNA"/>
</dbReference>
<dbReference type="SMR" id="A8M523"/>
<dbReference type="STRING" id="391037.Sare_4309"/>
<dbReference type="KEGG" id="saq:Sare_4309"/>
<dbReference type="PATRIC" id="fig|391037.6.peg.4350"/>
<dbReference type="eggNOG" id="COG0092">
    <property type="taxonomic scope" value="Bacteria"/>
</dbReference>
<dbReference type="HOGENOM" id="CLU_058591_0_0_11"/>
<dbReference type="OrthoDB" id="9806396at2"/>
<dbReference type="GO" id="GO:0022627">
    <property type="term" value="C:cytosolic small ribosomal subunit"/>
    <property type="evidence" value="ECO:0007669"/>
    <property type="project" value="TreeGrafter"/>
</dbReference>
<dbReference type="GO" id="GO:0003729">
    <property type="term" value="F:mRNA binding"/>
    <property type="evidence" value="ECO:0007669"/>
    <property type="project" value="UniProtKB-UniRule"/>
</dbReference>
<dbReference type="GO" id="GO:0019843">
    <property type="term" value="F:rRNA binding"/>
    <property type="evidence" value="ECO:0007669"/>
    <property type="project" value="UniProtKB-UniRule"/>
</dbReference>
<dbReference type="GO" id="GO:0003735">
    <property type="term" value="F:structural constituent of ribosome"/>
    <property type="evidence" value="ECO:0007669"/>
    <property type="project" value="InterPro"/>
</dbReference>
<dbReference type="GO" id="GO:0006412">
    <property type="term" value="P:translation"/>
    <property type="evidence" value="ECO:0007669"/>
    <property type="project" value="UniProtKB-UniRule"/>
</dbReference>
<dbReference type="CDD" id="cd02412">
    <property type="entry name" value="KH-II_30S_S3"/>
    <property type="match status" value="1"/>
</dbReference>
<dbReference type="FunFam" id="3.30.1140.32:FF:000002">
    <property type="entry name" value="30S ribosomal protein S3"/>
    <property type="match status" value="1"/>
</dbReference>
<dbReference type="FunFam" id="3.30.300.20:FF:000001">
    <property type="entry name" value="30S ribosomal protein S3"/>
    <property type="match status" value="1"/>
</dbReference>
<dbReference type="Gene3D" id="3.30.300.20">
    <property type="match status" value="1"/>
</dbReference>
<dbReference type="Gene3D" id="3.30.1140.32">
    <property type="entry name" value="Ribosomal protein S3, C-terminal domain"/>
    <property type="match status" value="1"/>
</dbReference>
<dbReference type="HAMAP" id="MF_01309_B">
    <property type="entry name" value="Ribosomal_uS3_B"/>
    <property type="match status" value="1"/>
</dbReference>
<dbReference type="InterPro" id="IPR004087">
    <property type="entry name" value="KH_dom"/>
</dbReference>
<dbReference type="InterPro" id="IPR015946">
    <property type="entry name" value="KH_dom-like_a/b"/>
</dbReference>
<dbReference type="InterPro" id="IPR004044">
    <property type="entry name" value="KH_dom_type_2"/>
</dbReference>
<dbReference type="InterPro" id="IPR009019">
    <property type="entry name" value="KH_sf_prok-type"/>
</dbReference>
<dbReference type="InterPro" id="IPR036419">
    <property type="entry name" value="Ribosomal_S3_C_sf"/>
</dbReference>
<dbReference type="InterPro" id="IPR005704">
    <property type="entry name" value="Ribosomal_uS3_bac-typ"/>
</dbReference>
<dbReference type="InterPro" id="IPR001351">
    <property type="entry name" value="Ribosomal_uS3_C"/>
</dbReference>
<dbReference type="InterPro" id="IPR018280">
    <property type="entry name" value="Ribosomal_uS3_CS"/>
</dbReference>
<dbReference type="NCBIfam" id="TIGR01009">
    <property type="entry name" value="rpsC_bact"/>
    <property type="match status" value="1"/>
</dbReference>
<dbReference type="PANTHER" id="PTHR11760">
    <property type="entry name" value="30S/40S RIBOSOMAL PROTEIN S3"/>
    <property type="match status" value="1"/>
</dbReference>
<dbReference type="PANTHER" id="PTHR11760:SF19">
    <property type="entry name" value="SMALL RIBOSOMAL SUBUNIT PROTEIN US3C"/>
    <property type="match status" value="1"/>
</dbReference>
<dbReference type="Pfam" id="PF07650">
    <property type="entry name" value="KH_2"/>
    <property type="match status" value="1"/>
</dbReference>
<dbReference type="Pfam" id="PF00189">
    <property type="entry name" value="Ribosomal_S3_C"/>
    <property type="match status" value="1"/>
</dbReference>
<dbReference type="SMART" id="SM00322">
    <property type="entry name" value="KH"/>
    <property type="match status" value="1"/>
</dbReference>
<dbReference type="SUPFAM" id="SSF54814">
    <property type="entry name" value="Prokaryotic type KH domain (KH-domain type II)"/>
    <property type="match status" value="1"/>
</dbReference>
<dbReference type="SUPFAM" id="SSF54821">
    <property type="entry name" value="Ribosomal protein S3 C-terminal domain"/>
    <property type="match status" value="1"/>
</dbReference>
<dbReference type="PROSITE" id="PS50823">
    <property type="entry name" value="KH_TYPE_2"/>
    <property type="match status" value="1"/>
</dbReference>
<dbReference type="PROSITE" id="PS00548">
    <property type="entry name" value="RIBOSOMAL_S3"/>
    <property type="match status" value="1"/>
</dbReference>
<keyword id="KW-0687">Ribonucleoprotein</keyword>
<keyword id="KW-0689">Ribosomal protein</keyword>
<keyword id="KW-0694">RNA-binding</keyword>
<keyword id="KW-0699">rRNA-binding</keyword>
<gene>
    <name evidence="1" type="primary">rpsC</name>
    <name type="ordered locus">Sare_4309</name>
</gene>
<proteinExistence type="inferred from homology"/>
<organism>
    <name type="scientific">Salinispora arenicola (strain CNS-205)</name>
    <dbReference type="NCBI Taxonomy" id="391037"/>
    <lineage>
        <taxon>Bacteria</taxon>
        <taxon>Bacillati</taxon>
        <taxon>Actinomycetota</taxon>
        <taxon>Actinomycetes</taxon>
        <taxon>Micromonosporales</taxon>
        <taxon>Micromonosporaceae</taxon>
        <taxon>Salinispora</taxon>
    </lineage>
</organism>
<reference key="1">
    <citation type="submission" date="2007-10" db="EMBL/GenBank/DDBJ databases">
        <title>Complete sequence of Salinispora arenicola CNS-205.</title>
        <authorList>
            <consortium name="US DOE Joint Genome Institute"/>
            <person name="Copeland A."/>
            <person name="Lucas S."/>
            <person name="Lapidus A."/>
            <person name="Barry K."/>
            <person name="Glavina del Rio T."/>
            <person name="Dalin E."/>
            <person name="Tice H."/>
            <person name="Pitluck S."/>
            <person name="Foster B."/>
            <person name="Schmutz J."/>
            <person name="Larimer F."/>
            <person name="Land M."/>
            <person name="Hauser L."/>
            <person name="Kyrpides N."/>
            <person name="Ivanova N."/>
            <person name="Jensen P.R."/>
            <person name="Moore B.S."/>
            <person name="Penn K."/>
            <person name="Jenkins C."/>
            <person name="Udwary D."/>
            <person name="Xiang L."/>
            <person name="Gontang E."/>
            <person name="Richardson P."/>
        </authorList>
    </citation>
    <scope>NUCLEOTIDE SEQUENCE [LARGE SCALE GENOMIC DNA]</scope>
    <source>
        <strain>CNS-205</strain>
    </source>
</reference>
<feature type="chain" id="PRO_1000086153" description="Small ribosomal subunit protein uS3">
    <location>
        <begin position="1"/>
        <end position="288"/>
    </location>
</feature>
<feature type="domain" description="KH type-2" evidence="1">
    <location>
        <begin position="38"/>
        <end position="106"/>
    </location>
</feature>
<feature type="region of interest" description="Disordered" evidence="2">
    <location>
        <begin position="209"/>
        <end position="288"/>
    </location>
</feature>
<feature type="compositionally biased region" description="Basic and acidic residues" evidence="2">
    <location>
        <begin position="219"/>
        <end position="232"/>
    </location>
</feature>
<feature type="compositionally biased region" description="Low complexity" evidence="2">
    <location>
        <begin position="249"/>
        <end position="264"/>
    </location>
</feature>
<feature type="compositionally biased region" description="Polar residues" evidence="2">
    <location>
        <begin position="277"/>
        <end position="288"/>
    </location>
</feature>
<accession>A8M523</accession>
<evidence type="ECO:0000255" key="1">
    <source>
        <dbReference type="HAMAP-Rule" id="MF_01309"/>
    </source>
</evidence>
<evidence type="ECO:0000256" key="2">
    <source>
        <dbReference type="SAM" id="MobiDB-lite"/>
    </source>
</evidence>
<evidence type="ECO:0000305" key="3"/>
<protein>
    <recommendedName>
        <fullName evidence="1">Small ribosomal subunit protein uS3</fullName>
    </recommendedName>
    <alternativeName>
        <fullName evidence="3">30S ribosomal protein S3</fullName>
    </alternativeName>
</protein>